<reference key="1">
    <citation type="submission" date="2008-02" db="EMBL/GenBank/DDBJ databases">
        <title>Complete sequence of Synechococcus sp. PCC 7002.</title>
        <authorList>
            <person name="Li T."/>
            <person name="Zhao J."/>
            <person name="Zhao C."/>
            <person name="Liu Z."/>
            <person name="Zhao F."/>
            <person name="Marquardt J."/>
            <person name="Nomura C.T."/>
            <person name="Persson S."/>
            <person name="Detter J.C."/>
            <person name="Richardson P.M."/>
            <person name="Lanz C."/>
            <person name="Schuster S.C."/>
            <person name="Wang J."/>
            <person name="Li S."/>
            <person name="Huang X."/>
            <person name="Cai T."/>
            <person name="Yu Z."/>
            <person name="Luo J."/>
            <person name="Zhao J."/>
            <person name="Bryant D.A."/>
        </authorList>
    </citation>
    <scope>NUCLEOTIDE SEQUENCE [LARGE SCALE GENOMIC DNA]</scope>
    <source>
        <strain>ATCC 27264 / PCC 7002 / PR-6</strain>
    </source>
</reference>
<organism>
    <name type="scientific">Picosynechococcus sp. (strain ATCC 27264 / PCC 7002 / PR-6)</name>
    <name type="common">Agmenellum quadruplicatum</name>
    <dbReference type="NCBI Taxonomy" id="32049"/>
    <lineage>
        <taxon>Bacteria</taxon>
        <taxon>Bacillati</taxon>
        <taxon>Cyanobacteriota</taxon>
        <taxon>Cyanophyceae</taxon>
        <taxon>Oscillatoriophycideae</taxon>
        <taxon>Chroococcales</taxon>
        <taxon>Geminocystaceae</taxon>
        <taxon>Picosynechococcus</taxon>
    </lineage>
</organism>
<comment type="function">
    <text evidence="1">Peptide chain release factor 1 directs the termination of translation in response to the peptide chain termination codons UAG and UAA.</text>
</comment>
<comment type="subcellular location">
    <subcellularLocation>
        <location evidence="1">Cytoplasm</location>
    </subcellularLocation>
</comment>
<comment type="PTM">
    <text evidence="1">Methylated by PrmC. Methylation increases the termination efficiency of RF1.</text>
</comment>
<comment type="similarity">
    <text evidence="1">Belongs to the prokaryotic/mitochondrial release factor family.</text>
</comment>
<dbReference type="EMBL" id="CP000951">
    <property type="protein sequence ID" value="ACA99038.1"/>
    <property type="molecule type" value="Genomic_DNA"/>
</dbReference>
<dbReference type="RefSeq" id="WP_012306662.1">
    <property type="nucleotide sequence ID" value="NZ_JAHHPU010000001.1"/>
</dbReference>
<dbReference type="SMR" id="B1XJH8"/>
<dbReference type="STRING" id="32049.SYNPCC7002_A1036"/>
<dbReference type="KEGG" id="syp:SYNPCC7002_A1036"/>
<dbReference type="eggNOG" id="COG0216">
    <property type="taxonomic scope" value="Bacteria"/>
</dbReference>
<dbReference type="HOGENOM" id="CLU_036856_0_1_3"/>
<dbReference type="Proteomes" id="UP000001688">
    <property type="component" value="Chromosome"/>
</dbReference>
<dbReference type="GO" id="GO:0005737">
    <property type="term" value="C:cytoplasm"/>
    <property type="evidence" value="ECO:0007669"/>
    <property type="project" value="UniProtKB-SubCell"/>
</dbReference>
<dbReference type="GO" id="GO:0016149">
    <property type="term" value="F:translation release factor activity, codon specific"/>
    <property type="evidence" value="ECO:0007669"/>
    <property type="project" value="UniProtKB-UniRule"/>
</dbReference>
<dbReference type="FunFam" id="3.30.160.20:FF:000004">
    <property type="entry name" value="Peptide chain release factor 1"/>
    <property type="match status" value="1"/>
</dbReference>
<dbReference type="FunFam" id="3.30.70.1660:FF:000002">
    <property type="entry name" value="Peptide chain release factor 1"/>
    <property type="match status" value="1"/>
</dbReference>
<dbReference type="FunFam" id="3.30.70.1660:FF:000014">
    <property type="entry name" value="Peptide chain release factor 1"/>
    <property type="match status" value="1"/>
</dbReference>
<dbReference type="Gene3D" id="3.30.160.20">
    <property type="match status" value="1"/>
</dbReference>
<dbReference type="Gene3D" id="3.30.70.1660">
    <property type="match status" value="2"/>
</dbReference>
<dbReference type="Gene3D" id="6.10.140.1950">
    <property type="match status" value="1"/>
</dbReference>
<dbReference type="HAMAP" id="MF_00093">
    <property type="entry name" value="Rel_fac_1"/>
    <property type="match status" value="1"/>
</dbReference>
<dbReference type="InterPro" id="IPR005139">
    <property type="entry name" value="PCRF"/>
</dbReference>
<dbReference type="InterPro" id="IPR000352">
    <property type="entry name" value="Pep_chain_release_fac_I"/>
</dbReference>
<dbReference type="InterPro" id="IPR045853">
    <property type="entry name" value="Pep_chain_release_fac_I_sf"/>
</dbReference>
<dbReference type="InterPro" id="IPR050057">
    <property type="entry name" value="Prokaryotic/Mito_RF"/>
</dbReference>
<dbReference type="InterPro" id="IPR004373">
    <property type="entry name" value="RF-1"/>
</dbReference>
<dbReference type="NCBIfam" id="TIGR00019">
    <property type="entry name" value="prfA"/>
    <property type="match status" value="1"/>
</dbReference>
<dbReference type="NCBIfam" id="NF001859">
    <property type="entry name" value="PRK00591.1"/>
    <property type="match status" value="1"/>
</dbReference>
<dbReference type="PANTHER" id="PTHR43804">
    <property type="entry name" value="LD18447P"/>
    <property type="match status" value="1"/>
</dbReference>
<dbReference type="PANTHER" id="PTHR43804:SF8">
    <property type="entry name" value="PEPTIDE CHAIN RELEASE FACTOR APG3, CHLOROPLASTIC"/>
    <property type="match status" value="1"/>
</dbReference>
<dbReference type="Pfam" id="PF03462">
    <property type="entry name" value="PCRF"/>
    <property type="match status" value="1"/>
</dbReference>
<dbReference type="Pfam" id="PF00472">
    <property type="entry name" value="RF-1"/>
    <property type="match status" value="1"/>
</dbReference>
<dbReference type="SMART" id="SM00937">
    <property type="entry name" value="PCRF"/>
    <property type="match status" value="1"/>
</dbReference>
<dbReference type="SUPFAM" id="SSF75620">
    <property type="entry name" value="Release factor"/>
    <property type="match status" value="1"/>
</dbReference>
<dbReference type="PROSITE" id="PS00745">
    <property type="entry name" value="RF_PROK_I"/>
    <property type="match status" value="1"/>
</dbReference>
<evidence type="ECO:0000255" key="1">
    <source>
        <dbReference type="HAMAP-Rule" id="MF_00093"/>
    </source>
</evidence>
<accession>B1XJH8</accession>
<keyword id="KW-0963">Cytoplasm</keyword>
<keyword id="KW-0488">Methylation</keyword>
<keyword id="KW-0648">Protein biosynthesis</keyword>
<keyword id="KW-1185">Reference proteome</keyword>
<gene>
    <name evidence="1" type="primary">prfA</name>
    <name type="ordered locus">SYNPCC7002_A1036</name>
</gene>
<name>RF1_PICP2</name>
<proteinExistence type="inferred from homology"/>
<protein>
    <recommendedName>
        <fullName evidence="1">Peptide chain release factor 1</fullName>
        <shortName evidence="1">RF-1</shortName>
    </recommendedName>
</protein>
<sequence>MAEAYLLDKLKSVEQTFQEMTRRLADPDIATNPDELQRVAKIRSSLEETVNTFNQWKEAQEELRGAKEILKESAGDPEMKEMAALEVEELENTIDTLENRLKILLLPKDPNDEKNIMLEIRAGTGGDEASIWAGDLLRMYSRYAEGQNWRVKLLSESAADMGGFKAVILEIQGEQVYSKLKYEAGVHRVQRVPVTEAGGRVHTSTATIAVMPEVDDVEVEIDPKDIEMTTARSGGAGGQNVNKVETAVDLFHKPTGIRVFCTEERSQLQNRERAMQILRAKLYEMELQRQQEEVSSMRKSQVGTGARSEKIRTYNYKDNRVTDHRLGQNFSLAPALEGDIEDMLQACISQDQQAQLEQLAAES</sequence>
<feature type="chain" id="PRO_1000093515" description="Peptide chain release factor 1">
    <location>
        <begin position="1"/>
        <end position="363"/>
    </location>
</feature>
<feature type="modified residue" description="N5-methylglutamine" evidence="1">
    <location>
        <position position="239"/>
    </location>
</feature>